<dbReference type="EMBL" id="BA000028">
    <property type="protein sequence ID" value="BAC12074.1"/>
    <property type="molecule type" value="Genomic_DNA"/>
</dbReference>
<dbReference type="RefSeq" id="WP_011064521.1">
    <property type="nucleotide sequence ID" value="NC_004193.1"/>
</dbReference>
<dbReference type="SMR" id="Q8ETY3"/>
<dbReference type="STRING" id="221109.gene:10732308"/>
<dbReference type="KEGG" id="oih:OB0118"/>
<dbReference type="eggNOG" id="COG0051">
    <property type="taxonomic scope" value="Bacteria"/>
</dbReference>
<dbReference type="HOGENOM" id="CLU_122625_1_3_9"/>
<dbReference type="OrthoDB" id="9804464at2"/>
<dbReference type="PhylomeDB" id="Q8ETY3"/>
<dbReference type="Proteomes" id="UP000000822">
    <property type="component" value="Chromosome"/>
</dbReference>
<dbReference type="GO" id="GO:1990904">
    <property type="term" value="C:ribonucleoprotein complex"/>
    <property type="evidence" value="ECO:0007669"/>
    <property type="project" value="UniProtKB-KW"/>
</dbReference>
<dbReference type="GO" id="GO:0005840">
    <property type="term" value="C:ribosome"/>
    <property type="evidence" value="ECO:0007669"/>
    <property type="project" value="UniProtKB-KW"/>
</dbReference>
<dbReference type="GO" id="GO:0003735">
    <property type="term" value="F:structural constituent of ribosome"/>
    <property type="evidence" value="ECO:0007669"/>
    <property type="project" value="InterPro"/>
</dbReference>
<dbReference type="GO" id="GO:0000049">
    <property type="term" value="F:tRNA binding"/>
    <property type="evidence" value="ECO:0007669"/>
    <property type="project" value="UniProtKB-UniRule"/>
</dbReference>
<dbReference type="GO" id="GO:0006412">
    <property type="term" value="P:translation"/>
    <property type="evidence" value="ECO:0007669"/>
    <property type="project" value="UniProtKB-UniRule"/>
</dbReference>
<dbReference type="FunFam" id="3.30.70.600:FF:000001">
    <property type="entry name" value="30S ribosomal protein S10"/>
    <property type="match status" value="1"/>
</dbReference>
<dbReference type="Gene3D" id="3.30.70.600">
    <property type="entry name" value="Ribosomal protein S10 domain"/>
    <property type="match status" value="1"/>
</dbReference>
<dbReference type="HAMAP" id="MF_00508">
    <property type="entry name" value="Ribosomal_uS10"/>
    <property type="match status" value="1"/>
</dbReference>
<dbReference type="InterPro" id="IPR001848">
    <property type="entry name" value="Ribosomal_uS10"/>
</dbReference>
<dbReference type="InterPro" id="IPR018268">
    <property type="entry name" value="Ribosomal_uS10_CS"/>
</dbReference>
<dbReference type="InterPro" id="IPR027486">
    <property type="entry name" value="Ribosomal_uS10_dom"/>
</dbReference>
<dbReference type="InterPro" id="IPR036838">
    <property type="entry name" value="Ribosomal_uS10_dom_sf"/>
</dbReference>
<dbReference type="NCBIfam" id="NF001861">
    <property type="entry name" value="PRK00596.1"/>
    <property type="match status" value="1"/>
</dbReference>
<dbReference type="NCBIfam" id="TIGR01049">
    <property type="entry name" value="rpsJ_bact"/>
    <property type="match status" value="1"/>
</dbReference>
<dbReference type="PANTHER" id="PTHR11700">
    <property type="entry name" value="30S RIBOSOMAL PROTEIN S10 FAMILY MEMBER"/>
    <property type="match status" value="1"/>
</dbReference>
<dbReference type="Pfam" id="PF00338">
    <property type="entry name" value="Ribosomal_S10"/>
    <property type="match status" value="1"/>
</dbReference>
<dbReference type="PRINTS" id="PR00971">
    <property type="entry name" value="RIBOSOMALS10"/>
</dbReference>
<dbReference type="SMART" id="SM01403">
    <property type="entry name" value="Ribosomal_S10"/>
    <property type="match status" value="1"/>
</dbReference>
<dbReference type="SUPFAM" id="SSF54999">
    <property type="entry name" value="Ribosomal protein S10"/>
    <property type="match status" value="1"/>
</dbReference>
<dbReference type="PROSITE" id="PS00361">
    <property type="entry name" value="RIBOSOMAL_S10"/>
    <property type="match status" value="1"/>
</dbReference>
<organism>
    <name type="scientific">Oceanobacillus iheyensis (strain DSM 14371 / CIP 107618 / JCM 11309 / KCTC 3954 / HTE831)</name>
    <dbReference type="NCBI Taxonomy" id="221109"/>
    <lineage>
        <taxon>Bacteria</taxon>
        <taxon>Bacillati</taxon>
        <taxon>Bacillota</taxon>
        <taxon>Bacilli</taxon>
        <taxon>Bacillales</taxon>
        <taxon>Bacillaceae</taxon>
        <taxon>Oceanobacillus</taxon>
    </lineage>
</organism>
<sequence>MAKEKIRIRLKAYDHRILDQSAEKIVDTAKRSGAKVSGPIPLPTEKSVYTVLRAVHKYKDSREQFEMRTHKRLIDILEPTPKTVDALMRLDLPSGVDIEIKL</sequence>
<name>RS10_OCEIH</name>
<protein>
    <recommendedName>
        <fullName evidence="1">Small ribosomal subunit protein uS10</fullName>
    </recommendedName>
    <alternativeName>
        <fullName evidence="2">30S ribosomal protein S10</fullName>
    </alternativeName>
</protein>
<accession>Q8ETY3</accession>
<reference key="1">
    <citation type="journal article" date="2002" name="Nucleic Acids Res.">
        <title>Genome sequence of Oceanobacillus iheyensis isolated from the Iheya Ridge and its unexpected adaptive capabilities to extreme environments.</title>
        <authorList>
            <person name="Takami H."/>
            <person name="Takaki Y."/>
            <person name="Uchiyama I."/>
        </authorList>
    </citation>
    <scope>NUCLEOTIDE SEQUENCE [LARGE SCALE GENOMIC DNA]</scope>
    <source>
        <strain>DSM 14371 / CIP 107618 / JCM 11309 / KCTC 3954 / HTE831</strain>
    </source>
</reference>
<evidence type="ECO:0000255" key="1">
    <source>
        <dbReference type="HAMAP-Rule" id="MF_00508"/>
    </source>
</evidence>
<evidence type="ECO:0000305" key="2"/>
<comment type="function">
    <text evidence="1">Involved in the binding of tRNA to the ribosomes.</text>
</comment>
<comment type="subunit">
    <text evidence="1">Part of the 30S ribosomal subunit.</text>
</comment>
<comment type="similarity">
    <text evidence="1">Belongs to the universal ribosomal protein uS10 family.</text>
</comment>
<proteinExistence type="inferred from homology"/>
<keyword id="KW-1185">Reference proteome</keyword>
<keyword id="KW-0687">Ribonucleoprotein</keyword>
<keyword id="KW-0689">Ribosomal protein</keyword>
<feature type="chain" id="PRO_0000146566" description="Small ribosomal subunit protein uS10">
    <location>
        <begin position="1"/>
        <end position="102"/>
    </location>
</feature>
<gene>
    <name evidence="1" type="primary">rpsJ</name>
    <name type="ordered locus">OB0118</name>
</gene>